<feature type="chain" id="PRO_0000069362" description="C-X-C chemokine receptor type 5">
    <location>
        <begin position="1"/>
        <end position="374"/>
    </location>
</feature>
<feature type="topological domain" description="Extracellular" evidence="2">
    <location>
        <begin position="1"/>
        <end position="57"/>
    </location>
</feature>
<feature type="transmembrane region" description="Helical; Name=1" evidence="2">
    <location>
        <begin position="58"/>
        <end position="78"/>
    </location>
</feature>
<feature type="topological domain" description="Cytoplasmic" evidence="2">
    <location>
        <begin position="79"/>
        <end position="90"/>
    </location>
</feature>
<feature type="transmembrane region" description="Helical; Name=2" evidence="2">
    <location>
        <begin position="91"/>
        <end position="111"/>
    </location>
</feature>
<feature type="topological domain" description="Extracellular" evidence="2">
    <location>
        <begin position="112"/>
        <end position="126"/>
    </location>
</feature>
<feature type="transmembrane region" description="Helical; Name=3" evidence="2">
    <location>
        <begin position="127"/>
        <end position="147"/>
    </location>
</feature>
<feature type="topological domain" description="Cytoplasmic" evidence="2">
    <location>
        <begin position="148"/>
        <end position="169"/>
    </location>
</feature>
<feature type="transmembrane region" description="Helical; Name=4" evidence="2">
    <location>
        <begin position="170"/>
        <end position="190"/>
    </location>
</feature>
<feature type="topological domain" description="Extracellular" evidence="2">
    <location>
        <begin position="191"/>
        <end position="221"/>
    </location>
</feature>
<feature type="transmembrane region" description="Helical; Name=5" evidence="2">
    <location>
        <begin position="222"/>
        <end position="242"/>
    </location>
</feature>
<feature type="topological domain" description="Cytoplasmic" evidence="2">
    <location>
        <begin position="243"/>
        <end position="261"/>
    </location>
</feature>
<feature type="transmembrane region" description="Helical; Name=6" evidence="2">
    <location>
        <begin position="262"/>
        <end position="282"/>
    </location>
</feature>
<feature type="topological domain" description="Extracellular" evidence="2">
    <location>
        <begin position="283"/>
        <end position="306"/>
    </location>
</feature>
<feature type="transmembrane region" description="Helical; Name=7" evidence="2">
    <location>
        <begin position="307"/>
        <end position="327"/>
    </location>
</feature>
<feature type="topological domain" description="Cytoplasmic" evidence="2">
    <location>
        <begin position="328"/>
        <end position="374"/>
    </location>
</feature>
<feature type="glycosylation site" description="N-linked (GlcNAc...) asparagine" evidence="2">
    <location>
        <position position="28"/>
    </location>
</feature>
<feature type="glycosylation site" description="N-linked (GlcNAc...) asparagine" evidence="2">
    <location>
        <position position="198"/>
    </location>
</feature>
<feature type="disulfide bond" evidence="3">
    <location>
        <begin position="124"/>
        <end position="204"/>
    </location>
</feature>
<organism>
    <name type="scientific">Rattus norvegicus</name>
    <name type="common">Rat</name>
    <dbReference type="NCBI Taxonomy" id="10116"/>
    <lineage>
        <taxon>Eukaryota</taxon>
        <taxon>Metazoa</taxon>
        <taxon>Chordata</taxon>
        <taxon>Craniata</taxon>
        <taxon>Vertebrata</taxon>
        <taxon>Euteleostomi</taxon>
        <taxon>Mammalia</taxon>
        <taxon>Eutheria</taxon>
        <taxon>Euarchontoglires</taxon>
        <taxon>Glires</taxon>
        <taxon>Rodentia</taxon>
        <taxon>Myomorpha</taxon>
        <taxon>Muroidea</taxon>
        <taxon>Muridae</taxon>
        <taxon>Murinae</taxon>
        <taxon>Rattus</taxon>
    </lineage>
</organism>
<comment type="function">
    <text evidence="1">Cytokine receptor that binds to B-lymphocyte chemoattractant (BLC). Involved in B-cell migration into B-cell follicles of spleen and Peyer patches but not into those of mesenteric or peripheral lymph nodes (By similarity).</text>
</comment>
<comment type="subcellular location">
    <subcellularLocation>
        <location>Cell membrane</location>
        <topology>Multi-pass membrane protein</topology>
    </subcellularLocation>
</comment>
<comment type="tissue specificity">
    <text>Expressed in neuronal and lymphatic tissue.</text>
</comment>
<comment type="similarity">
    <text evidence="3">Belongs to the G-protein coupled receptor 1 family.</text>
</comment>
<evidence type="ECO:0000250" key="1"/>
<evidence type="ECO:0000255" key="2"/>
<evidence type="ECO:0000255" key="3">
    <source>
        <dbReference type="PROSITE-ProRule" id="PRU00521"/>
    </source>
</evidence>
<dbReference type="EMBL" id="X71463">
    <property type="protein sequence ID" value="CAA50582.1"/>
    <property type="molecule type" value="Genomic_DNA"/>
</dbReference>
<dbReference type="PIR" id="S32785">
    <property type="entry name" value="S32785"/>
</dbReference>
<dbReference type="RefSeq" id="NP_445755.1">
    <property type="nucleotide sequence ID" value="NM_053303.1"/>
</dbReference>
<dbReference type="SMR" id="P34997"/>
<dbReference type="FunCoup" id="P34997">
    <property type="interactions" value="13"/>
</dbReference>
<dbReference type="STRING" id="10116.ENSRNOP00000016580"/>
<dbReference type="GlyCosmos" id="P34997">
    <property type="glycosylation" value="2 sites, No reported glycans"/>
</dbReference>
<dbReference type="GlyGen" id="P34997">
    <property type="glycosylation" value="2 sites"/>
</dbReference>
<dbReference type="PhosphoSitePlus" id="P34997"/>
<dbReference type="PaxDb" id="10116-ENSRNOP00000016580"/>
<dbReference type="GeneID" id="29363"/>
<dbReference type="KEGG" id="rno:29363"/>
<dbReference type="UCSC" id="RGD:62010">
    <property type="organism name" value="rat"/>
</dbReference>
<dbReference type="AGR" id="RGD:62010"/>
<dbReference type="CTD" id="643"/>
<dbReference type="RGD" id="62010">
    <property type="gene designation" value="Cxcr5"/>
</dbReference>
<dbReference type="eggNOG" id="KOG3656">
    <property type="taxonomic scope" value="Eukaryota"/>
</dbReference>
<dbReference type="InParanoid" id="P34997"/>
<dbReference type="OrthoDB" id="9818824at2759"/>
<dbReference type="PhylomeDB" id="P34997"/>
<dbReference type="Reactome" id="R-RNO-380108">
    <property type="pathway name" value="Chemokine receptors bind chemokines"/>
</dbReference>
<dbReference type="Reactome" id="R-RNO-418594">
    <property type="pathway name" value="G alpha (i) signalling events"/>
</dbReference>
<dbReference type="PRO" id="PR:P34997"/>
<dbReference type="Proteomes" id="UP000002494">
    <property type="component" value="Unplaced"/>
</dbReference>
<dbReference type="GO" id="GO:0009897">
    <property type="term" value="C:external side of plasma membrane"/>
    <property type="evidence" value="ECO:0000266"/>
    <property type="project" value="RGD"/>
</dbReference>
<dbReference type="GO" id="GO:0019957">
    <property type="term" value="F:C-C chemokine binding"/>
    <property type="evidence" value="ECO:0000318"/>
    <property type="project" value="GO_Central"/>
</dbReference>
<dbReference type="GO" id="GO:0016493">
    <property type="term" value="F:C-C chemokine receptor activity"/>
    <property type="evidence" value="ECO:0000318"/>
    <property type="project" value="GO_Central"/>
</dbReference>
<dbReference type="GO" id="GO:0016494">
    <property type="term" value="F:C-X-C chemokine receptor activity"/>
    <property type="evidence" value="ECO:0007669"/>
    <property type="project" value="InterPro"/>
</dbReference>
<dbReference type="GO" id="GO:0042113">
    <property type="term" value="P:B cell activation"/>
    <property type="evidence" value="ECO:0007669"/>
    <property type="project" value="UniProtKB-KW"/>
</dbReference>
<dbReference type="GO" id="GO:0019722">
    <property type="term" value="P:calcium-mediated signaling"/>
    <property type="evidence" value="ECO:0000318"/>
    <property type="project" value="GO_Central"/>
</dbReference>
<dbReference type="GO" id="GO:0060326">
    <property type="term" value="P:cell chemotaxis"/>
    <property type="evidence" value="ECO:0000318"/>
    <property type="project" value="GO_Central"/>
</dbReference>
<dbReference type="GO" id="GO:0006955">
    <property type="term" value="P:immune response"/>
    <property type="evidence" value="ECO:0000318"/>
    <property type="project" value="GO_Central"/>
</dbReference>
<dbReference type="GO" id="GO:0030595">
    <property type="term" value="P:leukocyte chemotaxis"/>
    <property type="evidence" value="ECO:0000266"/>
    <property type="project" value="RGD"/>
</dbReference>
<dbReference type="GO" id="GO:0048535">
    <property type="term" value="P:lymph node development"/>
    <property type="evidence" value="ECO:0000266"/>
    <property type="project" value="RGD"/>
</dbReference>
<dbReference type="GO" id="GO:0032467">
    <property type="term" value="P:positive regulation of cytokinesis"/>
    <property type="evidence" value="ECO:0000266"/>
    <property type="project" value="RGD"/>
</dbReference>
<dbReference type="GO" id="GO:0007204">
    <property type="term" value="P:positive regulation of cytosolic calcium ion concentration"/>
    <property type="evidence" value="ECO:0000318"/>
    <property type="project" value="GO_Central"/>
</dbReference>
<dbReference type="CDD" id="cd15181">
    <property type="entry name" value="7tmA_CXCR5"/>
    <property type="match status" value="1"/>
</dbReference>
<dbReference type="FunFam" id="1.20.1070.10:FF:000143">
    <property type="entry name" value="C-X-C chemokine receptor type 5"/>
    <property type="match status" value="1"/>
</dbReference>
<dbReference type="Gene3D" id="1.20.1070.10">
    <property type="entry name" value="Rhodopsin 7-helix transmembrane proteins"/>
    <property type="match status" value="1"/>
</dbReference>
<dbReference type="InterPro" id="IPR050119">
    <property type="entry name" value="CCR1-9-like"/>
</dbReference>
<dbReference type="InterPro" id="IPR001053">
    <property type="entry name" value="Chemokine_CXCR5"/>
</dbReference>
<dbReference type="InterPro" id="IPR000276">
    <property type="entry name" value="GPCR_Rhodpsn"/>
</dbReference>
<dbReference type="InterPro" id="IPR017452">
    <property type="entry name" value="GPCR_Rhodpsn_7TM"/>
</dbReference>
<dbReference type="PANTHER" id="PTHR10489:SF618">
    <property type="entry name" value="C-X-C CHEMOKINE RECEPTOR TYPE 5"/>
    <property type="match status" value="1"/>
</dbReference>
<dbReference type="PANTHER" id="PTHR10489">
    <property type="entry name" value="CELL ADHESION MOLECULE"/>
    <property type="match status" value="1"/>
</dbReference>
<dbReference type="Pfam" id="PF00001">
    <property type="entry name" value="7tm_1"/>
    <property type="match status" value="1"/>
</dbReference>
<dbReference type="PRINTS" id="PR00564">
    <property type="entry name" value="CXCCHMKINER5"/>
</dbReference>
<dbReference type="PRINTS" id="PR00237">
    <property type="entry name" value="GPCRRHODOPSN"/>
</dbReference>
<dbReference type="SUPFAM" id="SSF81321">
    <property type="entry name" value="Family A G protein-coupled receptor-like"/>
    <property type="match status" value="1"/>
</dbReference>
<dbReference type="PROSITE" id="PS00237">
    <property type="entry name" value="G_PROTEIN_RECEP_F1_1"/>
    <property type="match status" value="1"/>
</dbReference>
<dbReference type="PROSITE" id="PS50262">
    <property type="entry name" value="G_PROTEIN_RECEP_F1_2"/>
    <property type="match status" value="1"/>
</dbReference>
<name>CXCR5_RAT</name>
<gene>
    <name type="primary">Cxcr5</name>
    <name type="synonym">Blr1</name>
</gene>
<protein>
    <recommendedName>
        <fullName>C-X-C chemokine receptor type 5</fullName>
        <shortName>CXC-R5</shortName>
        <shortName>CXCR-5</shortName>
    </recommendedName>
    <alternativeName>
        <fullName>Burkitt lymphoma receptor 1 homolog</fullName>
    </alternativeName>
    <alternativeName>
        <fullName>Neurolymphatic receptor</fullName>
        <shortName>NLR</shortName>
    </alternativeName>
    <cdAntigenName>CD185</cdAntigenName>
</protein>
<proteinExistence type="evidence at transcript level"/>
<accession>P34997</accession>
<sequence length="374" mass="42013">MNSPISLDMGAITYNMDDLYKELAIYSNSTEIPLQDSIFCSTEEGPLLTSFKTIFMPVAYSLIFLLGMMGNILVLVILERHRHTRSSTETFLFHLAVADLLLVFILPFAVAEGSVGWVLGTFLCKTVIALHKINFYCSSLLLACIAVDRYLAIVHAVHAYRRRRLLSIHITCSTIWLAGFLFALPELLFAKVVQPHNNESLPQCIFSQENEAETRAWFASRFLYHTGGFLLPMLVMAWCYVGVVHRLLQAQRRPQRQKAVRVAILVTSIFLLCWSPYHIVIFLDTLERLKAVNSSCELSGYLSVAITLCEFLGLAHCCLNPMLYTFAGVKFRSDLSRLLTKLGCAGPASLCQLFPGWRKSSLSESENATSLTTF</sequence>
<keyword id="KW-0075">B-cell activation</keyword>
<keyword id="KW-1003">Cell membrane</keyword>
<keyword id="KW-1015">Disulfide bond</keyword>
<keyword id="KW-0297">G-protein coupled receptor</keyword>
<keyword id="KW-0325">Glycoprotein</keyword>
<keyword id="KW-0472">Membrane</keyword>
<keyword id="KW-0675">Receptor</keyword>
<keyword id="KW-1185">Reference proteome</keyword>
<keyword id="KW-0807">Transducer</keyword>
<keyword id="KW-0812">Transmembrane</keyword>
<keyword id="KW-1133">Transmembrane helix</keyword>
<reference key="1">
    <citation type="journal article" date="1993" name="FEBS Lett.">
        <title>Cloning of a novel putative G-protein-coupled receptor (NLR) which is expressed in neuronal and lymphatic tissue.</title>
        <authorList>
            <person name="Kouba M."/>
            <person name="Vanetti M."/>
            <person name="Wang X."/>
            <person name="Schaefer M."/>
            <person name="Hoellt V."/>
        </authorList>
    </citation>
    <scope>NUCLEOTIDE SEQUENCE [GENOMIC DNA]</scope>
    <source>
        <tissue>Spleen</tissue>
    </source>
</reference>